<sequence>MSHPQSHRYFSVNAPAGGERHLALDEKGVLCLTVVDPATRKLLIPLSCVYPTQAQQRTTIPSLCQLFLNGRCRQGTQCHQVHAALDVVAALRSQVDYLPICCALHGDRDYVNALDNRSWMSRVVVHVPDATYGGGYIPLARFSYTTPISRILREVNARLESGVSVAAVDGGGHPKRMVLNACDFKICGLHTLDRCRYAEECIFLHICKEIVVDVNNGSGDYSLTSQARDGGEPGPRGAKKGSVFVSVSRQQRVRGRPLSYPTVEYQTPFPLRSYEGSMSYNAVSDINSDCSWVSGRYPTGAYMESRMDAAPLPSLAPRFVQGHPGVPRCYSSTTTSTTTTAAAREDAAMYGAGGCWDRWSSPESGCAPCAFVGSCSDCHYADNNNYSGCNGYAYGSRNGYGSDGPNCYFCPGDECSSTHLCPNGTSSSVPQPVESVSSASVSARAWQHNPYGVTPTGGISD</sequence>
<proteinExistence type="evidence at transcript level"/>
<feature type="chain" id="PRO_0000451931" description="RNA-binding protein ZCH321">
    <location>
        <begin position="1"/>
        <end position="461"/>
    </location>
</feature>
<feature type="zinc finger region" description="C3H1-type 1" evidence="2">
    <location>
        <begin position="63"/>
        <end position="85"/>
    </location>
</feature>
<feature type="zinc finger region" description="C3H1-type 2" evidence="2">
    <location>
        <begin position="181"/>
        <end position="208"/>
    </location>
</feature>
<feature type="region of interest" description="Disordered" evidence="3">
    <location>
        <begin position="224"/>
        <end position="243"/>
    </location>
</feature>
<feature type="short sequence motif" description="MKT1-binding motif" evidence="7">
    <location>
        <begin position="446"/>
        <end position="451"/>
    </location>
</feature>
<organism evidence="10">
    <name type="scientific">Trypanosoma brucei brucei (strain 927/4 GUTat10.1)</name>
    <dbReference type="NCBI Taxonomy" id="185431"/>
    <lineage>
        <taxon>Eukaryota</taxon>
        <taxon>Discoba</taxon>
        <taxon>Euglenozoa</taxon>
        <taxon>Kinetoplastea</taxon>
        <taxon>Metakinetoplastina</taxon>
        <taxon>Trypanosomatida</taxon>
        <taxon>Trypanosomatidae</taxon>
        <taxon>Trypanosoma</taxon>
    </lineage>
</organism>
<dbReference type="EMBL" id="AC159408">
    <property type="protein sequence ID" value="AAX69418.1"/>
    <property type="molecule type" value="Genomic_DNA"/>
</dbReference>
<dbReference type="EMBL" id="CP000070">
    <property type="protein sequence ID" value="AAZ12331.1"/>
    <property type="molecule type" value="Genomic_DNA"/>
</dbReference>
<dbReference type="RefSeq" id="XP_845890.1">
    <property type="nucleotide sequence ID" value="XM_840797.1"/>
</dbReference>
<dbReference type="STRING" id="185431.Q57Y77"/>
<dbReference type="PaxDb" id="5691-AAZ12331"/>
<dbReference type="GeneID" id="3658479"/>
<dbReference type="KEGG" id="tbr:Tb927.7.2670"/>
<dbReference type="VEuPathDB" id="TriTrypDB:Tb927.7.2670"/>
<dbReference type="eggNOG" id="ENOG502RZ2R">
    <property type="taxonomic scope" value="Eukaryota"/>
</dbReference>
<dbReference type="InParanoid" id="Q57Y77"/>
<dbReference type="OrthoDB" id="244435at2759"/>
<dbReference type="Proteomes" id="UP000008524">
    <property type="component" value="Chromosome 7"/>
</dbReference>
<dbReference type="GO" id="GO:0005737">
    <property type="term" value="C:cytoplasm"/>
    <property type="evidence" value="ECO:0000314"/>
    <property type="project" value="GeneDB"/>
</dbReference>
<dbReference type="GO" id="GO:0003723">
    <property type="term" value="F:RNA binding"/>
    <property type="evidence" value="ECO:0007669"/>
    <property type="project" value="UniProtKB-KW"/>
</dbReference>
<dbReference type="GO" id="GO:0008270">
    <property type="term" value="F:zinc ion binding"/>
    <property type="evidence" value="ECO:0007669"/>
    <property type="project" value="UniProtKB-KW"/>
</dbReference>
<dbReference type="GO" id="GO:0048255">
    <property type="term" value="P:mRNA stabilization"/>
    <property type="evidence" value="ECO:0000315"/>
    <property type="project" value="UniProtKB"/>
</dbReference>
<dbReference type="GO" id="GO:0010608">
    <property type="term" value="P:post-transcriptional regulation of gene expression"/>
    <property type="evidence" value="ECO:0000314"/>
    <property type="project" value="GeneDB"/>
</dbReference>
<dbReference type="GO" id="GO:0006417">
    <property type="term" value="P:regulation of translation"/>
    <property type="evidence" value="ECO:0007669"/>
    <property type="project" value="UniProtKB-KW"/>
</dbReference>
<dbReference type="InterPro" id="IPR053125">
    <property type="entry name" value="RNA-bd_mRNA_stabilization_reg"/>
</dbReference>
<dbReference type="InterPro" id="IPR000571">
    <property type="entry name" value="Znf_CCCH"/>
</dbReference>
<dbReference type="PANTHER" id="PTHR37035">
    <property type="entry name" value="C3H1-TYPE DOMAIN-CONTAINING PROTEIN-RELATED"/>
    <property type="match status" value="1"/>
</dbReference>
<dbReference type="PANTHER" id="PTHR37035:SF6">
    <property type="entry name" value="RNA-BINDING PROTEIN ZCH321"/>
    <property type="match status" value="1"/>
</dbReference>
<dbReference type="PROSITE" id="PS50103">
    <property type="entry name" value="ZF_C3H1"/>
    <property type="match status" value="2"/>
</dbReference>
<comment type="function">
    <text evidence="1 4">RNA-binding protein involved in regulation of mRNA stability (PubMed:31743541). Promotes mRNA stabilization by recruiting MKT1 and PBP1 (By similarity). Stabilizes transcripts encoding mitochondrial proteins (PubMed:31743541).</text>
</comment>
<comment type="developmental stage">
    <text evidence="4">Expressed in the procyclic form.</text>
</comment>
<comment type="induction">
    <text evidence="4">Induced during the differentiation of the bloodstream form to the procyclic form.</text>
</comment>
<comment type="disruption phenotype">
    <text evidence="4">RNAi-mediated knockdown in procyclic form does not affect growth rate (PubMed:31743541). Simultaneous knockdown of ZC3H20 and ZC3H21 in the procyclic form results in a severe population growth defect and a shift towards the bloodstream form transcriptome (PubMed:31743541). Simultaneous knockdown of ZC3H20 and ZC3H21 in the bloodstream form is lethal (PubMed:31743541).</text>
</comment>
<gene>
    <name evidence="5" type="primary">ZCH321</name>
    <name evidence="8" type="ORF">Tb927.7.2670</name>
</gene>
<evidence type="ECO:0000250" key="1">
    <source>
        <dbReference type="UniProtKB" id="Q57W26"/>
    </source>
</evidence>
<evidence type="ECO:0000255" key="2">
    <source>
        <dbReference type="PROSITE-ProRule" id="PRU00723"/>
    </source>
</evidence>
<evidence type="ECO:0000256" key="3">
    <source>
        <dbReference type="SAM" id="MobiDB-lite"/>
    </source>
</evidence>
<evidence type="ECO:0000269" key="4">
    <source>
    </source>
</evidence>
<evidence type="ECO:0000303" key="5">
    <source>
    </source>
</evidence>
<evidence type="ECO:0000305" key="6"/>
<evidence type="ECO:0000305" key="7">
    <source>
    </source>
</evidence>
<evidence type="ECO:0000312" key="8">
    <source>
        <dbReference type="EMBL" id="AAX69418.1"/>
    </source>
</evidence>
<evidence type="ECO:0000312" key="9">
    <source>
        <dbReference type="EMBL" id="AAZ12331.1"/>
    </source>
</evidence>
<evidence type="ECO:0000312" key="10">
    <source>
        <dbReference type="Proteomes" id="UP000008524"/>
    </source>
</evidence>
<name>ZC321_TRYB2</name>
<protein>
    <recommendedName>
        <fullName evidence="6">RNA-binding protein ZCH321</fullName>
    </recommendedName>
    <alternativeName>
        <fullName evidence="6">CCCH zinc finger protein ZC3H21</fullName>
    </alternativeName>
</protein>
<accession>Q57Y77</accession>
<accession>D6XKI4</accession>
<keyword id="KW-0479">Metal-binding</keyword>
<keyword id="KW-1185">Reference proteome</keyword>
<keyword id="KW-0677">Repeat</keyword>
<keyword id="KW-0694">RNA-binding</keyword>
<keyword id="KW-0810">Translation regulation</keyword>
<keyword id="KW-0862">Zinc</keyword>
<keyword id="KW-0863">Zinc-finger</keyword>
<reference evidence="9" key="1">
    <citation type="journal article" date="2005" name="Science">
        <title>Comparative genomics of trypanosomatid parasitic protozoa.</title>
        <authorList>
            <person name="El-Sayed N.M."/>
            <person name="Myler P.J."/>
            <person name="Blandin G."/>
            <person name="Berriman M."/>
            <person name="Crabtree J."/>
            <person name="Aggarwal G."/>
            <person name="Caler E."/>
            <person name="Renauld H."/>
            <person name="Worthey E.A."/>
            <person name="Hertz-Fowler C."/>
            <person name="Ghedin E."/>
            <person name="Peacock C."/>
            <person name="Bartholomeu D.C."/>
            <person name="Haas B.J."/>
            <person name="Tran A.N."/>
            <person name="Wortman J.R."/>
            <person name="Alsmark U.C."/>
            <person name="Angiuoli S."/>
            <person name="Anupama A."/>
            <person name="Badger J."/>
            <person name="Bringaud F."/>
            <person name="Cadag E."/>
            <person name="Carlton J.M."/>
            <person name="Cerqueira G.C."/>
            <person name="Creasy T."/>
            <person name="Delcher A.L."/>
            <person name="Djikeng A."/>
            <person name="Embley T.M."/>
            <person name="Hauser C."/>
            <person name="Ivens A.C."/>
            <person name="Kummerfeld S.K."/>
            <person name="Pereira-Leal J.B."/>
            <person name="Nilsson D."/>
            <person name="Peterson J."/>
            <person name="Salzberg S.L."/>
            <person name="Shallom J."/>
            <person name="Silva J.C."/>
            <person name="Sundaram J."/>
            <person name="Westenberger S."/>
            <person name="White O."/>
            <person name="Melville S.E."/>
            <person name="Donelson J.E."/>
            <person name="Andersson B."/>
            <person name="Stuart K.D."/>
            <person name="Hall N."/>
        </authorList>
    </citation>
    <scope>NUCLEOTIDE SEQUENCE [LARGE SCALE GENOMIC DNA]</scope>
    <source>
        <strain evidence="9">927/4 GUTat10.1</strain>
    </source>
</reference>
<reference evidence="10" key="2">
    <citation type="journal article" date="2005" name="Science">
        <title>The genome of the African trypanosome Trypanosoma brucei.</title>
        <authorList>
            <person name="Berriman M."/>
            <person name="Ghedin E."/>
            <person name="Hertz-Fowler C."/>
            <person name="Blandin G."/>
            <person name="Renauld H."/>
            <person name="Bartholomeu D.C."/>
            <person name="Lennard N.J."/>
            <person name="Caler E."/>
            <person name="Hamlin N.E."/>
            <person name="Haas B."/>
            <person name="Bohme U."/>
            <person name="Hannick L."/>
            <person name="Aslett M.A."/>
            <person name="Shallom J."/>
            <person name="Marcello L."/>
            <person name="Hou L."/>
            <person name="Wickstead B."/>
            <person name="Alsmark U.C.M."/>
            <person name="Arrowsmith C."/>
            <person name="Atkin R.J."/>
            <person name="Barron A.J."/>
            <person name="Bringaud F."/>
            <person name="Brooks K."/>
            <person name="Carrington M."/>
            <person name="Cherevach I."/>
            <person name="Chillingworth T.J."/>
            <person name="Churcher C."/>
            <person name="Clark L.N."/>
            <person name="Corton C.H."/>
            <person name="Cronin A."/>
            <person name="Davies R.M."/>
            <person name="Doggett J."/>
            <person name="Djikeng A."/>
            <person name="Feldblyum T."/>
            <person name="Field M.C."/>
            <person name="Fraser A."/>
            <person name="Goodhead I."/>
            <person name="Hance Z."/>
            <person name="Harper D."/>
            <person name="Harris B.R."/>
            <person name="Hauser H."/>
            <person name="Hostetler J."/>
            <person name="Ivens A."/>
            <person name="Jagels K."/>
            <person name="Johnson D."/>
            <person name="Johnson J."/>
            <person name="Jones K."/>
            <person name="Kerhornou A.X."/>
            <person name="Koo H."/>
            <person name="Larke N."/>
            <person name="Landfear S."/>
            <person name="Larkin C."/>
            <person name="Leech V."/>
            <person name="Line A."/>
            <person name="Lord A."/>
            <person name="Macleod A."/>
            <person name="Mooney P.J."/>
            <person name="Moule S."/>
            <person name="Martin D.M."/>
            <person name="Morgan G.W."/>
            <person name="Mungall K."/>
            <person name="Norbertczak H."/>
            <person name="Ormond D."/>
            <person name="Pai G."/>
            <person name="Peacock C.S."/>
            <person name="Peterson J."/>
            <person name="Quail M.A."/>
            <person name="Rabbinowitsch E."/>
            <person name="Rajandream M.A."/>
            <person name="Reitter C."/>
            <person name="Salzberg S.L."/>
            <person name="Sanders M."/>
            <person name="Schobel S."/>
            <person name="Sharp S."/>
            <person name="Simmonds M."/>
            <person name="Simpson A.J."/>
            <person name="Tallon L."/>
            <person name="Turner C.M."/>
            <person name="Tait A."/>
            <person name="Tivey A.R."/>
            <person name="Van Aken S."/>
            <person name="Walker D."/>
            <person name="Wanless D."/>
            <person name="Wang S."/>
            <person name="White B."/>
            <person name="White O."/>
            <person name="Whitehead S."/>
            <person name="Woodward J."/>
            <person name="Wortman J."/>
            <person name="Adams M.D."/>
            <person name="Embley T.M."/>
            <person name="Gull K."/>
            <person name="Ullu E."/>
            <person name="Barry J.D."/>
            <person name="Fairlamb A.H."/>
            <person name="Opperdoes F."/>
            <person name="Barrell B.G."/>
            <person name="Donelson J.E."/>
            <person name="Hall N."/>
            <person name="Fraser C.M."/>
            <person name="Melville S.E."/>
            <person name="El-Sayed N.M.A."/>
        </authorList>
    </citation>
    <scope>NUCLEOTIDE SEQUENCE [LARGE SCALE GENOMIC DNA]</scope>
    <source>
        <strain evidence="10">927/4 GUTat10.1</strain>
    </source>
</reference>
<reference evidence="6" key="3">
    <citation type="journal article" date="2020" name="Mol. Microbiol.">
        <title>The zinc finger proteins ZC3H20 and ZC3H21 stabilise mRNAs encoding membrane proteins and mitochondrial proteins in insect-form Trypanosoma brucei.</title>
        <authorList>
            <person name="Liu B."/>
            <person name="Kamanyi Marucha K."/>
            <person name="Clayton C."/>
        </authorList>
    </citation>
    <scope>FUNCTION</scope>
    <scope>DEVELOPMENTAL STAGE</scope>
    <scope>INDUCTION</scope>
    <scope>DISRUPTION PHENOTYPE</scope>
    <scope>MOTIF</scope>
    <source>
        <strain evidence="5">427</strain>
    </source>
</reference>